<accession>Q650K9</accession>
<protein>
    <recommendedName>
        <fullName evidence="1">Putative membrane protein insertion efficiency factor</fullName>
    </recommendedName>
</protein>
<sequence length="73" mass="8361">MKRLLSYILLLPIYFYRACISPMTPPSCRFTPTCSQYAIEAIKKHGPFKGLYLAVRRILRCHPWGGSGYDPVP</sequence>
<evidence type="ECO:0000255" key="1">
    <source>
        <dbReference type="HAMAP-Rule" id="MF_00386"/>
    </source>
</evidence>
<gene>
    <name type="ordered locus">BF0066</name>
</gene>
<dbReference type="EMBL" id="AP006841">
    <property type="protein sequence ID" value="BAD46815.1"/>
    <property type="molecule type" value="Genomic_DNA"/>
</dbReference>
<dbReference type="RefSeq" id="YP_097349.1">
    <property type="nucleotide sequence ID" value="NC_006347.1"/>
</dbReference>
<dbReference type="STRING" id="295405.BF0066"/>
<dbReference type="DNASU" id="3081610"/>
<dbReference type="KEGG" id="bfr:BF0066"/>
<dbReference type="PATRIC" id="fig|295405.11.peg.103"/>
<dbReference type="HOGENOM" id="CLU_144811_6_1_10"/>
<dbReference type="OrthoDB" id="9801753at2"/>
<dbReference type="Proteomes" id="UP000002197">
    <property type="component" value="Chromosome"/>
</dbReference>
<dbReference type="GO" id="GO:0005886">
    <property type="term" value="C:plasma membrane"/>
    <property type="evidence" value="ECO:0007669"/>
    <property type="project" value="UniProtKB-SubCell"/>
</dbReference>
<dbReference type="HAMAP" id="MF_00386">
    <property type="entry name" value="UPF0161_YidD"/>
    <property type="match status" value="1"/>
</dbReference>
<dbReference type="InterPro" id="IPR002696">
    <property type="entry name" value="Membr_insert_effic_factor_YidD"/>
</dbReference>
<dbReference type="NCBIfam" id="TIGR00278">
    <property type="entry name" value="membrane protein insertion efficiency factor YidD"/>
    <property type="match status" value="1"/>
</dbReference>
<dbReference type="PANTHER" id="PTHR33383">
    <property type="entry name" value="MEMBRANE PROTEIN INSERTION EFFICIENCY FACTOR-RELATED"/>
    <property type="match status" value="1"/>
</dbReference>
<dbReference type="PANTHER" id="PTHR33383:SF1">
    <property type="entry name" value="MEMBRANE PROTEIN INSERTION EFFICIENCY FACTOR-RELATED"/>
    <property type="match status" value="1"/>
</dbReference>
<dbReference type="Pfam" id="PF01809">
    <property type="entry name" value="YidD"/>
    <property type="match status" value="1"/>
</dbReference>
<dbReference type="SMART" id="SM01234">
    <property type="entry name" value="Haemolytic"/>
    <property type="match status" value="1"/>
</dbReference>
<comment type="function">
    <text evidence="1">Could be involved in insertion of integral membrane proteins into the membrane.</text>
</comment>
<comment type="subcellular location">
    <subcellularLocation>
        <location evidence="1">Cell inner membrane</location>
        <topology evidence="1">Peripheral membrane protein</topology>
        <orientation evidence="1">Cytoplasmic side</orientation>
    </subcellularLocation>
</comment>
<comment type="similarity">
    <text evidence="1">Belongs to the UPF0161 family.</text>
</comment>
<proteinExistence type="inferred from homology"/>
<name>YIDD_BACFR</name>
<keyword id="KW-0997">Cell inner membrane</keyword>
<keyword id="KW-1003">Cell membrane</keyword>
<keyword id="KW-0472">Membrane</keyword>
<reference key="1">
    <citation type="journal article" date="2004" name="Proc. Natl. Acad. Sci. U.S.A.">
        <title>Genomic analysis of Bacteroides fragilis reveals extensive DNA inversions regulating cell surface adaptation.</title>
        <authorList>
            <person name="Kuwahara T."/>
            <person name="Yamashita A."/>
            <person name="Hirakawa H."/>
            <person name="Nakayama H."/>
            <person name="Toh H."/>
            <person name="Okada N."/>
            <person name="Kuhara S."/>
            <person name="Hattori M."/>
            <person name="Hayashi T."/>
            <person name="Ohnishi Y."/>
        </authorList>
    </citation>
    <scope>NUCLEOTIDE SEQUENCE [LARGE SCALE GENOMIC DNA]</scope>
    <source>
        <strain>YCH46</strain>
    </source>
</reference>
<feature type="chain" id="PRO_0000253078" description="Putative membrane protein insertion efficiency factor">
    <location>
        <begin position="1"/>
        <end position="73"/>
    </location>
</feature>
<organism>
    <name type="scientific">Bacteroides fragilis (strain YCH46)</name>
    <dbReference type="NCBI Taxonomy" id="295405"/>
    <lineage>
        <taxon>Bacteria</taxon>
        <taxon>Pseudomonadati</taxon>
        <taxon>Bacteroidota</taxon>
        <taxon>Bacteroidia</taxon>
        <taxon>Bacteroidales</taxon>
        <taxon>Bacteroidaceae</taxon>
        <taxon>Bacteroides</taxon>
    </lineage>
</organism>